<organism>
    <name type="scientific">Shewanella woodyi (strain ATCC 51908 / MS32)</name>
    <dbReference type="NCBI Taxonomy" id="392500"/>
    <lineage>
        <taxon>Bacteria</taxon>
        <taxon>Pseudomonadati</taxon>
        <taxon>Pseudomonadota</taxon>
        <taxon>Gammaproteobacteria</taxon>
        <taxon>Alteromonadales</taxon>
        <taxon>Shewanellaceae</taxon>
        <taxon>Shewanella</taxon>
    </lineage>
</organism>
<sequence length="550" mass="57392">MAAKEVLFGNDARVKMLAGVNVLANAVKVTLGPKGRNVVLDKSFGAPLITKDGVSVAKEIELEDKFENMGAQMVKEVASKANDAAGDGTTTATVLAQAIVTEGLKAVAAGMNPMDLKRGIDKAVVAAVAELKNLSQECADTNAIAQVGTISANSDETIGEIIATAMEKVGKEGVITVEEGQALENELDVVEGMQFDRGYLSPYFINKPETGSVELESPFILLVDKKVSNIRELLPILEGLAKTGKPLLIVAEDVEGEALATLVVNNMRGIVKVAAVKAPGFGDRRKAMLQDIAILTGGTVIAEEIGLELEKATLEDLGTAKRVIITKDDTTIIDGTGEQDQIQARVAQIKVQAEESTSDYDKEKLQERMAKLAGGVAVIKVGAATEVEMKEKKARVEDALHATRAAVEEGVVAGGGVALVRVASKIADVEVINEDQKHGVVIALRAMEAPLRQIATNAGEESSVVANNVKNGSGNYGYNAGNDTYGDMLEMGILDPTKVTRSALQFAASIAGLMITTEAMVGEVPQEAAGAPDMGGMGGMGGMGGMGGMM</sequence>
<gene>
    <name evidence="1" type="primary">groEL</name>
    <name evidence="1" type="synonym">groL</name>
    <name type="ordered locus">Swoo_4308</name>
</gene>
<reference key="1">
    <citation type="submission" date="2008-02" db="EMBL/GenBank/DDBJ databases">
        <title>Complete sequence of Shewanella woodyi ATCC 51908.</title>
        <authorList>
            <consortium name="US DOE Joint Genome Institute"/>
            <person name="Copeland A."/>
            <person name="Lucas S."/>
            <person name="Lapidus A."/>
            <person name="Glavina del Rio T."/>
            <person name="Dalin E."/>
            <person name="Tice H."/>
            <person name="Bruce D."/>
            <person name="Goodwin L."/>
            <person name="Pitluck S."/>
            <person name="Sims D."/>
            <person name="Brettin T."/>
            <person name="Detter J.C."/>
            <person name="Han C."/>
            <person name="Kuske C.R."/>
            <person name="Schmutz J."/>
            <person name="Larimer F."/>
            <person name="Land M."/>
            <person name="Hauser L."/>
            <person name="Kyrpides N."/>
            <person name="Lykidis A."/>
            <person name="Zhao J.-S."/>
            <person name="Richardson P."/>
        </authorList>
    </citation>
    <scope>NUCLEOTIDE SEQUENCE [LARGE SCALE GENOMIC DNA]</scope>
    <source>
        <strain>ATCC 51908 / MS32</strain>
    </source>
</reference>
<evidence type="ECO:0000255" key="1">
    <source>
        <dbReference type="HAMAP-Rule" id="MF_00600"/>
    </source>
</evidence>
<feature type="chain" id="PRO_1000130059" description="Chaperonin GroEL">
    <location>
        <begin position="1"/>
        <end position="550"/>
    </location>
</feature>
<feature type="binding site" evidence="1">
    <location>
        <begin position="30"/>
        <end position="33"/>
    </location>
    <ligand>
        <name>ATP</name>
        <dbReference type="ChEBI" id="CHEBI:30616"/>
    </ligand>
</feature>
<feature type="binding site" evidence="1">
    <location>
        <position position="51"/>
    </location>
    <ligand>
        <name>ATP</name>
        <dbReference type="ChEBI" id="CHEBI:30616"/>
    </ligand>
</feature>
<feature type="binding site" evidence="1">
    <location>
        <begin position="87"/>
        <end position="91"/>
    </location>
    <ligand>
        <name>ATP</name>
        <dbReference type="ChEBI" id="CHEBI:30616"/>
    </ligand>
</feature>
<feature type="binding site" evidence="1">
    <location>
        <position position="415"/>
    </location>
    <ligand>
        <name>ATP</name>
        <dbReference type="ChEBI" id="CHEBI:30616"/>
    </ligand>
</feature>
<feature type="binding site" evidence="1">
    <location>
        <position position="495"/>
    </location>
    <ligand>
        <name>ATP</name>
        <dbReference type="ChEBI" id="CHEBI:30616"/>
    </ligand>
</feature>
<protein>
    <recommendedName>
        <fullName evidence="1">Chaperonin GroEL</fullName>
        <ecNumber evidence="1">5.6.1.7</ecNumber>
    </recommendedName>
    <alternativeName>
        <fullName evidence="1">60 kDa chaperonin</fullName>
    </alternativeName>
    <alternativeName>
        <fullName evidence="1">Chaperonin-60</fullName>
        <shortName evidence="1">Cpn60</shortName>
    </alternativeName>
</protein>
<dbReference type="EC" id="5.6.1.7" evidence="1"/>
<dbReference type="EMBL" id="CP000961">
    <property type="protein sequence ID" value="ACA88562.1"/>
    <property type="molecule type" value="Genomic_DNA"/>
</dbReference>
<dbReference type="RefSeq" id="WP_012326889.1">
    <property type="nucleotide sequence ID" value="NC_010506.1"/>
</dbReference>
<dbReference type="SMR" id="B1KIR6"/>
<dbReference type="STRING" id="392500.Swoo_4308"/>
<dbReference type="KEGG" id="swd:Swoo_4308"/>
<dbReference type="eggNOG" id="COG0459">
    <property type="taxonomic scope" value="Bacteria"/>
</dbReference>
<dbReference type="HOGENOM" id="CLU_016503_3_0_6"/>
<dbReference type="Proteomes" id="UP000002168">
    <property type="component" value="Chromosome"/>
</dbReference>
<dbReference type="GO" id="GO:0005737">
    <property type="term" value="C:cytoplasm"/>
    <property type="evidence" value="ECO:0007669"/>
    <property type="project" value="UniProtKB-SubCell"/>
</dbReference>
<dbReference type="GO" id="GO:0005524">
    <property type="term" value="F:ATP binding"/>
    <property type="evidence" value="ECO:0007669"/>
    <property type="project" value="UniProtKB-UniRule"/>
</dbReference>
<dbReference type="GO" id="GO:0140662">
    <property type="term" value="F:ATP-dependent protein folding chaperone"/>
    <property type="evidence" value="ECO:0007669"/>
    <property type="project" value="InterPro"/>
</dbReference>
<dbReference type="GO" id="GO:0016853">
    <property type="term" value="F:isomerase activity"/>
    <property type="evidence" value="ECO:0007669"/>
    <property type="project" value="UniProtKB-KW"/>
</dbReference>
<dbReference type="GO" id="GO:0051082">
    <property type="term" value="F:unfolded protein binding"/>
    <property type="evidence" value="ECO:0007669"/>
    <property type="project" value="UniProtKB-UniRule"/>
</dbReference>
<dbReference type="GO" id="GO:0042026">
    <property type="term" value="P:protein refolding"/>
    <property type="evidence" value="ECO:0007669"/>
    <property type="project" value="UniProtKB-UniRule"/>
</dbReference>
<dbReference type="CDD" id="cd03344">
    <property type="entry name" value="GroEL"/>
    <property type="match status" value="1"/>
</dbReference>
<dbReference type="FunFam" id="1.10.560.10:FF:000001">
    <property type="entry name" value="60 kDa chaperonin"/>
    <property type="match status" value="1"/>
</dbReference>
<dbReference type="FunFam" id="3.50.7.10:FF:000001">
    <property type="entry name" value="60 kDa chaperonin"/>
    <property type="match status" value="1"/>
</dbReference>
<dbReference type="Gene3D" id="3.50.7.10">
    <property type="entry name" value="GroEL"/>
    <property type="match status" value="1"/>
</dbReference>
<dbReference type="Gene3D" id="1.10.560.10">
    <property type="entry name" value="GroEL-like equatorial domain"/>
    <property type="match status" value="1"/>
</dbReference>
<dbReference type="Gene3D" id="3.30.260.10">
    <property type="entry name" value="TCP-1-like chaperonin intermediate domain"/>
    <property type="match status" value="1"/>
</dbReference>
<dbReference type="HAMAP" id="MF_00600">
    <property type="entry name" value="CH60"/>
    <property type="match status" value="1"/>
</dbReference>
<dbReference type="InterPro" id="IPR018370">
    <property type="entry name" value="Chaperonin_Cpn60_CS"/>
</dbReference>
<dbReference type="InterPro" id="IPR001844">
    <property type="entry name" value="Cpn60/GroEL"/>
</dbReference>
<dbReference type="InterPro" id="IPR002423">
    <property type="entry name" value="Cpn60/GroEL/TCP-1"/>
</dbReference>
<dbReference type="InterPro" id="IPR027409">
    <property type="entry name" value="GroEL-like_apical_dom_sf"/>
</dbReference>
<dbReference type="InterPro" id="IPR027413">
    <property type="entry name" value="GROEL-like_equatorial_sf"/>
</dbReference>
<dbReference type="InterPro" id="IPR027410">
    <property type="entry name" value="TCP-1-like_intermed_sf"/>
</dbReference>
<dbReference type="NCBIfam" id="TIGR02348">
    <property type="entry name" value="GroEL"/>
    <property type="match status" value="1"/>
</dbReference>
<dbReference type="NCBIfam" id="NF000592">
    <property type="entry name" value="PRK00013.1"/>
    <property type="match status" value="1"/>
</dbReference>
<dbReference type="NCBIfam" id="NF009487">
    <property type="entry name" value="PRK12849.1"/>
    <property type="match status" value="1"/>
</dbReference>
<dbReference type="NCBIfam" id="NF009488">
    <property type="entry name" value="PRK12850.1"/>
    <property type="match status" value="1"/>
</dbReference>
<dbReference type="NCBIfam" id="NF009489">
    <property type="entry name" value="PRK12851.1"/>
    <property type="match status" value="1"/>
</dbReference>
<dbReference type="PANTHER" id="PTHR45633">
    <property type="entry name" value="60 KDA HEAT SHOCK PROTEIN, MITOCHONDRIAL"/>
    <property type="match status" value="1"/>
</dbReference>
<dbReference type="Pfam" id="PF00118">
    <property type="entry name" value="Cpn60_TCP1"/>
    <property type="match status" value="1"/>
</dbReference>
<dbReference type="PRINTS" id="PR00298">
    <property type="entry name" value="CHAPERONIN60"/>
</dbReference>
<dbReference type="SUPFAM" id="SSF52029">
    <property type="entry name" value="GroEL apical domain-like"/>
    <property type="match status" value="1"/>
</dbReference>
<dbReference type="SUPFAM" id="SSF48592">
    <property type="entry name" value="GroEL equatorial domain-like"/>
    <property type="match status" value="2"/>
</dbReference>
<dbReference type="PROSITE" id="PS00296">
    <property type="entry name" value="CHAPERONINS_CPN60"/>
    <property type="match status" value="1"/>
</dbReference>
<accession>B1KIR6</accession>
<comment type="function">
    <text evidence="1">Together with its co-chaperonin GroES, plays an essential role in assisting protein folding. The GroEL-GroES system forms a nano-cage that allows encapsulation of the non-native substrate proteins and provides a physical environment optimized to promote and accelerate protein folding.</text>
</comment>
<comment type="catalytic activity">
    <reaction evidence="1">
        <text>ATP + H2O + a folded polypeptide = ADP + phosphate + an unfolded polypeptide.</text>
        <dbReference type="EC" id="5.6.1.7"/>
    </reaction>
</comment>
<comment type="subunit">
    <text evidence="1">Forms a cylinder of 14 subunits composed of two heptameric rings stacked back-to-back. Interacts with the co-chaperonin GroES.</text>
</comment>
<comment type="subcellular location">
    <subcellularLocation>
        <location evidence="1">Cytoplasm</location>
    </subcellularLocation>
</comment>
<comment type="similarity">
    <text evidence="1">Belongs to the chaperonin (HSP60) family.</text>
</comment>
<proteinExistence type="inferred from homology"/>
<keyword id="KW-0067">ATP-binding</keyword>
<keyword id="KW-0143">Chaperone</keyword>
<keyword id="KW-0963">Cytoplasm</keyword>
<keyword id="KW-0413">Isomerase</keyword>
<keyword id="KW-0547">Nucleotide-binding</keyword>
<keyword id="KW-1185">Reference proteome</keyword>
<name>CH60_SHEWM</name>